<name>IF2_BEII9</name>
<evidence type="ECO:0000250" key="1"/>
<evidence type="ECO:0000255" key="2">
    <source>
        <dbReference type="HAMAP-Rule" id="MF_00100"/>
    </source>
</evidence>
<evidence type="ECO:0000256" key="3">
    <source>
        <dbReference type="SAM" id="MobiDB-lite"/>
    </source>
</evidence>
<accession>B2IIJ7</accession>
<feature type="chain" id="PRO_1000117324" description="Translation initiation factor IF-2">
    <location>
        <begin position="1"/>
        <end position="1053"/>
    </location>
</feature>
<feature type="domain" description="tr-type G">
    <location>
        <begin position="550"/>
        <end position="720"/>
    </location>
</feature>
<feature type="region of interest" description="Disordered" evidence="3">
    <location>
        <begin position="1"/>
        <end position="442"/>
    </location>
</feature>
<feature type="region of interest" description="G1" evidence="1">
    <location>
        <begin position="559"/>
        <end position="566"/>
    </location>
</feature>
<feature type="region of interest" description="G2" evidence="1">
    <location>
        <begin position="584"/>
        <end position="588"/>
    </location>
</feature>
<feature type="region of interest" description="G3" evidence="1">
    <location>
        <begin position="606"/>
        <end position="609"/>
    </location>
</feature>
<feature type="region of interest" description="G4" evidence="1">
    <location>
        <begin position="660"/>
        <end position="663"/>
    </location>
</feature>
<feature type="region of interest" description="G5" evidence="1">
    <location>
        <begin position="696"/>
        <end position="698"/>
    </location>
</feature>
<feature type="compositionally biased region" description="Polar residues" evidence="3">
    <location>
        <begin position="1"/>
        <end position="20"/>
    </location>
</feature>
<feature type="compositionally biased region" description="Low complexity" evidence="3">
    <location>
        <begin position="64"/>
        <end position="76"/>
    </location>
</feature>
<feature type="compositionally biased region" description="Low complexity" evidence="3">
    <location>
        <begin position="83"/>
        <end position="102"/>
    </location>
</feature>
<feature type="compositionally biased region" description="Pro residues" evidence="3">
    <location>
        <begin position="131"/>
        <end position="141"/>
    </location>
</feature>
<feature type="compositionally biased region" description="Pro residues" evidence="3">
    <location>
        <begin position="150"/>
        <end position="161"/>
    </location>
</feature>
<feature type="compositionally biased region" description="Low complexity" evidence="3">
    <location>
        <begin position="178"/>
        <end position="220"/>
    </location>
</feature>
<feature type="compositionally biased region" description="Gly residues" evidence="3">
    <location>
        <begin position="255"/>
        <end position="264"/>
    </location>
</feature>
<feature type="compositionally biased region" description="Basic and acidic residues" evidence="3">
    <location>
        <begin position="279"/>
        <end position="288"/>
    </location>
</feature>
<feature type="compositionally biased region" description="Basic and acidic residues" evidence="3">
    <location>
        <begin position="295"/>
        <end position="353"/>
    </location>
</feature>
<feature type="compositionally biased region" description="Low complexity" evidence="3">
    <location>
        <begin position="375"/>
        <end position="386"/>
    </location>
</feature>
<feature type="binding site" evidence="2">
    <location>
        <begin position="559"/>
        <end position="566"/>
    </location>
    <ligand>
        <name>GTP</name>
        <dbReference type="ChEBI" id="CHEBI:37565"/>
    </ligand>
</feature>
<feature type="binding site" evidence="2">
    <location>
        <begin position="606"/>
        <end position="610"/>
    </location>
    <ligand>
        <name>GTP</name>
        <dbReference type="ChEBI" id="CHEBI:37565"/>
    </ligand>
</feature>
<feature type="binding site" evidence="2">
    <location>
        <begin position="660"/>
        <end position="663"/>
    </location>
    <ligand>
        <name>GTP</name>
        <dbReference type="ChEBI" id="CHEBI:37565"/>
    </ligand>
</feature>
<comment type="function">
    <text evidence="2">One of the essential components for the initiation of protein synthesis. Protects formylmethionyl-tRNA from spontaneous hydrolysis and promotes its binding to the 30S ribosomal subunits. Also involved in the hydrolysis of GTP during the formation of the 70S ribosomal complex.</text>
</comment>
<comment type="subcellular location">
    <subcellularLocation>
        <location evidence="2">Cytoplasm</location>
    </subcellularLocation>
</comment>
<comment type="similarity">
    <text evidence="2">Belongs to the TRAFAC class translation factor GTPase superfamily. Classic translation factor GTPase family. IF-2 subfamily.</text>
</comment>
<organism>
    <name type="scientific">Beijerinckia indica subsp. indica (strain ATCC 9039 / DSM 1715 / NCIMB 8712)</name>
    <dbReference type="NCBI Taxonomy" id="395963"/>
    <lineage>
        <taxon>Bacteria</taxon>
        <taxon>Pseudomonadati</taxon>
        <taxon>Pseudomonadota</taxon>
        <taxon>Alphaproteobacteria</taxon>
        <taxon>Hyphomicrobiales</taxon>
        <taxon>Beijerinckiaceae</taxon>
        <taxon>Beijerinckia</taxon>
    </lineage>
</organism>
<proteinExistence type="inferred from homology"/>
<protein>
    <recommendedName>
        <fullName evidence="2">Translation initiation factor IF-2</fullName>
    </recommendedName>
</protein>
<gene>
    <name evidence="2" type="primary">infB</name>
    <name type="ordered locus">Bind_1047</name>
</gene>
<sequence length="1053" mass="111003">MSESKNSGENTLSVTPTKTLSLKRPVEAGTVRQSFPHGRSKAVVVEKVKRRPIGPGGDGHPAREAAPTPAPAATVTAPPPAQRPAAPNPTAAPTTPPAAAVPNVPPPAPRAEVAPPSAQPAPAAPTAATPPAQPKAEPVPAPIAAQAAPAPVPPVPAPSAPVPSTSAAPAAPKPAPAPVSQAKPIQTAPVQTAPAAQASASQTTGPRPVAAGPRPATGAAKQATATPQRGAASPAQRPQTGGGQRSGGQQRNQSGGRGGPGRGESGSSRTPTGVVLRSLTDEEREARARALSGARIREEEDRKRAAAEAKAREEREAREREERAAAEARKAEEDARRLQEQEAKRRSEQEAKRRLSGGEPAPAASPSVARKPVMTATAAAPAAAAPSGRAAVTDEEETKRVIRRPGMPTKVIVPPRPTKGAEPKSRGRLTVATATGGEEEERTRSVAAFRRRQQRLRGHVNEVKEKLSREVILPETITIQELANRMSERGVDVIKLLMKQGQMAKITDVIDADTAQLIAEELGHTVKRVAESDVEEGLFDTVDVEEHLVPRPPVVTIMGHVDHGKTSLLDAIRHANVVSGEAGGITQHIGAYQITAPNGSPITFIDTPGHAAFTAMRARGAKVTDIVVLVVAADDGVMPQTAEAVAHARAAGVPIIVAINKIDKPDAKPERIRSELLQYEVQVESLGGDTLEVEVSATKKINLDKLLDLIALQAELLDLKANPDRAAEGTVIEASLDKGRGPVATVLVQRGTLRVGDIIVGGTHWGHVRALIDDKGATRSEAGPSMPVEVLGFSGSPEAGDRVAVVETEARAREITEYRERQRREQAAARGGQARGSLADMMSQLKNAGRKEFPLVIKGDVQGSVEAVVATLEKLNTDEVAARIIHAGVGGITESDITLAQAAGAVVLGFNVRALKEARALAEQQGIEIRYYNIIYNLVDDVKAAMSGLLAPTLREEMLGNAEILEVFNISKVGKVAGCRVTDGRVERGAHVRLIRDNVVVHEGKLSTLKRFKDEVKEVVAGQECGMAFESYQDMRPHDVIECYNVHEIKRSL</sequence>
<keyword id="KW-0963">Cytoplasm</keyword>
<keyword id="KW-0342">GTP-binding</keyword>
<keyword id="KW-0396">Initiation factor</keyword>
<keyword id="KW-0547">Nucleotide-binding</keyword>
<keyword id="KW-0648">Protein biosynthesis</keyword>
<keyword id="KW-1185">Reference proteome</keyword>
<dbReference type="EMBL" id="CP001016">
    <property type="protein sequence ID" value="ACB94690.1"/>
    <property type="molecule type" value="Genomic_DNA"/>
</dbReference>
<dbReference type="RefSeq" id="WP_012384047.1">
    <property type="nucleotide sequence ID" value="NC_010581.1"/>
</dbReference>
<dbReference type="SMR" id="B2IIJ7"/>
<dbReference type="STRING" id="395963.Bind_1047"/>
<dbReference type="KEGG" id="bid:Bind_1047"/>
<dbReference type="eggNOG" id="COG0532">
    <property type="taxonomic scope" value="Bacteria"/>
</dbReference>
<dbReference type="HOGENOM" id="CLU_006301_10_0_5"/>
<dbReference type="OrthoDB" id="9811804at2"/>
<dbReference type="Proteomes" id="UP000001695">
    <property type="component" value="Chromosome"/>
</dbReference>
<dbReference type="GO" id="GO:0005829">
    <property type="term" value="C:cytosol"/>
    <property type="evidence" value="ECO:0007669"/>
    <property type="project" value="TreeGrafter"/>
</dbReference>
<dbReference type="GO" id="GO:0005525">
    <property type="term" value="F:GTP binding"/>
    <property type="evidence" value="ECO:0007669"/>
    <property type="project" value="UniProtKB-KW"/>
</dbReference>
<dbReference type="GO" id="GO:0003924">
    <property type="term" value="F:GTPase activity"/>
    <property type="evidence" value="ECO:0007669"/>
    <property type="project" value="UniProtKB-UniRule"/>
</dbReference>
<dbReference type="GO" id="GO:0097216">
    <property type="term" value="F:guanosine tetraphosphate binding"/>
    <property type="evidence" value="ECO:0007669"/>
    <property type="project" value="UniProtKB-ARBA"/>
</dbReference>
<dbReference type="GO" id="GO:0003743">
    <property type="term" value="F:translation initiation factor activity"/>
    <property type="evidence" value="ECO:0007669"/>
    <property type="project" value="UniProtKB-UniRule"/>
</dbReference>
<dbReference type="CDD" id="cd01887">
    <property type="entry name" value="IF2_eIF5B"/>
    <property type="match status" value="1"/>
</dbReference>
<dbReference type="CDD" id="cd03702">
    <property type="entry name" value="IF2_mtIF2_II"/>
    <property type="match status" value="1"/>
</dbReference>
<dbReference type="CDD" id="cd03692">
    <property type="entry name" value="mtIF2_IVc"/>
    <property type="match status" value="1"/>
</dbReference>
<dbReference type="FunFam" id="2.40.30.10:FF:000007">
    <property type="entry name" value="Translation initiation factor IF-2"/>
    <property type="match status" value="1"/>
</dbReference>
<dbReference type="FunFam" id="2.40.30.10:FF:000008">
    <property type="entry name" value="Translation initiation factor IF-2"/>
    <property type="match status" value="1"/>
</dbReference>
<dbReference type="FunFam" id="3.40.50.10050:FF:000001">
    <property type="entry name" value="Translation initiation factor IF-2"/>
    <property type="match status" value="1"/>
</dbReference>
<dbReference type="FunFam" id="3.40.50.300:FF:000019">
    <property type="entry name" value="Translation initiation factor IF-2"/>
    <property type="match status" value="1"/>
</dbReference>
<dbReference type="Gene3D" id="3.40.50.300">
    <property type="entry name" value="P-loop containing nucleotide triphosphate hydrolases"/>
    <property type="match status" value="1"/>
</dbReference>
<dbReference type="Gene3D" id="2.40.30.10">
    <property type="entry name" value="Translation factors"/>
    <property type="match status" value="2"/>
</dbReference>
<dbReference type="Gene3D" id="3.40.50.10050">
    <property type="entry name" value="Translation initiation factor IF- 2, domain 3"/>
    <property type="match status" value="1"/>
</dbReference>
<dbReference type="HAMAP" id="MF_00100_B">
    <property type="entry name" value="IF_2_B"/>
    <property type="match status" value="1"/>
</dbReference>
<dbReference type="InterPro" id="IPR053905">
    <property type="entry name" value="EF-G-like_DII"/>
</dbReference>
<dbReference type="InterPro" id="IPR004161">
    <property type="entry name" value="EFTu-like_2"/>
</dbReference>
<dbReference type="InterPro" id="IPR013575">
    <property type="entry name" value="IF2_assoc_dom_bac"/>
</dbReference>
<dbReference type="InterPro" id="IPR044145">
    <property type="entry name" value="IF2_II"/>
</dbReference>
<dbReference type="InterPro" id="IPR006847">
    <property type="entry name" value="IF2_N"/>
</dbReference>
<dbReference type="InterPro" id="IPR027417">
    <property type="entry name" value="P-loop_NTPase"/>
</dbReference>
<dbReference type="InterPro" id="IPR005225">
    <property type="entry name" value="Small_GTP-bd"/>
</dbReference>
<dbReference type="InterPro" id="IPR000795">
    <property type="entry name" value="T_Tr_GTP-bd_dom"/>
</dbReference>
<dbReference type="InterPro" id="IPR000178">
    <property type="entry name" value="TF_IF2_bacterial-like"/>
</dbReference>
<dbReference type="InterPro" id="IPR015760">
    <property type="entry name" value="TIF_IF2"/>
</dbReference>
<dbReference type="InterPro" id="IPR023115">
    <property type="entry name" value="TIF_IF2_dom3"/>
</dbReference>
<dbReference type="InterPro" id="IPR036925">
    <property type="entry name" value="TIF_IF2_dom3_sf"/>
</dbReference>
<dbReference type="InterPro" id="IPR009000">
    <property type="entry name" value="Transl_B-barrel_sf"/>
</dbReference>
<dbReference type="NCBIfam" id="TIGR00487">
    <property type="entry name" value="IF-2"/>
    <property type="match status" value="1"/>
</dbReference>
<dbReference type="NCBIfam" id="TIGR00231">
    <property type="entry name" value="small_GTP"/>
    <property type="match status" value="1"/>
</dbReference>
<dbReference type="PANTHER" id="PTHR43381:SF5">
    <property type="entry name" value="TR-TYPE G DOMAIN-CONTAINING PROTEIN"/>
    <property type="match status" value="1"/>
</dbReference>
<dbReference type="PANTHER" id="PTHR43381">
    <property type="entry name" value="TRANSLATION INITIATION FACTOR IF-2-RELATED"/>
    <property type="match status" value="1"/>
</dbReference>
<dbReference type="Pfam" id="PF22042">
    <property type="entry name" value="EF-G_D2"/>
    <property type="match status" value="1"/>
</dbReference>
<dbReference type="Pfam" id="PF00009">
    <property type="entry name" value="GTP_EFTU"/>
    <property type="match status" value="1"/>
</dbReference>
<dbReference type="Pfam" id="PF03144">
    <property type="entry name" value="GTP_EFTU_D2"/>
    <property type="match status" value="1"/>
</dbReference>
<dbReference type="Pfam" id="PF11987">
    <property type="entry name" value="IF-2"/>
    <property type="match status" value="1"/>
</dbReference>
<dbReference type="Pfam" id="PF08364">
    <property type="entry name" value="IF2_assoc"/>
    <property type="match status" value="1"/>
</dbReference>
<dbReference type="Pfam" id="PF04760">
    <property type="entry name" value="IF2_N"/>
    <property type="match status" value="1"/>
</dbReference>
<dbReference type="SUPFAM" id="SSF52156">
    <property type="entry name" value="Initiation factor IF2/eIF5b, domain 3"/>
    <property type="match status" value="1"/>
</dbReference>
<dbReference type="SUPFAM" id="SSF52540">
    <property type="entry name" value="P-loop containing nucleoside triphosphate hydrolases"/>
    <property type="match status" value="1"/>
</dbReference>
<dbReference type="SUPFAM" id="SSF50447">
    <property type="entry name" value="Translation proteins"/>
    <property type="match status" value="2"/>
</dbReference>
<dbReference type="PROSITE" id="PS51722">
    <property type="entry name" value="G_TR_2"/>
    <property type="match status" value="1"/>
</dbReference>
<dbReference type="PROSITE" id="PS01176">
    <property type="entry name" value="IF2"/>
    <property type="match status" value="1"/>
</dbReference>
<reference key="1">
    <citation type="journal article" date="2010" name="J. Bacteriol.">
        <title>Complete genome sequence of Beijerinckia indica subsp. indica.</title>
        <authorList>
            <person name="Tamas I."/>
            <person name="Dedysh S.N."/>
            <person name="Liesack W."/>
            <person name="Stott M.B."/>
            <person name="Alam M."/>
            <person name="Murrell J.C."/>
            <person name="Dunfield P.F."/>
        </authorList>
    </citation>
    <scope>NUCLEOTIDE SEQUENCE [LARGE SCALE GENOMIC DNA]</scope>
    <source>
        <strain>ATCC 9039 / DSM 1715 / NCIMB 8712</strain>
    </source>
</reference>